<dbReference type="EC" id="2.3.1.191" evidence="1"/>
<dbReference type="EMBL" id="AE015924">
    <property type="protein sequence ID" value="AAQ65321.1"/>
    <property type="molecule type" value="Genomic_DNA"/>
</dbReference>
<dbReference type="RefSeq" id="WP_005873962.1">
    <property type="nucleotide sequence ID" value="NC_002950.2"/>
</dbReference>
<dbReference type="SMR" id="Q7MXT7"/>
<dbReference type="STRING" id="242619.PG_0072"/>
<dbReference type="EnsemblBacteria" id="AAQ65321">
    <property type="protein sequence ID" value="AAQ65321"/>
    <property type="gene ID" value="PG_0072"/>
</dbReference>
<dbReference type="KEGG" id="pgi:PG_0072"/>
<dbReference type="eggNOG" id="COG1044">
    <property type="taxonomic scope" value="Bacteria"/>
</dbReference>
<dbReference type="HOGENOM" id="CLU_049865_0_0_10"/>
<dbReference type="BioCyc" id="MetaCyc:HMPREF1322_RS03555-MONOMER"/>
<dbReference type="UniPathway" id="UPA00973"/>
<dbReference type="Proteomes" id="UP000000588">
    <property type="component" value="Chromosome"/>
</dbReference>
<dbReference type="GO" id="GO:0016020">
    <property type="term" value="C:membrane"/>
    <property type="evidence" value="ECO:0007669"/>
    <property type="project" value="GOC"/>
</dbReference>
<dbReference type="GO" id="GO:0016410">
    <property type="term" value="F:N-acyltransferase activity"/>
    <property type="evidence" value="ECO:0007669"/>
    <property type="project" value="InterPro"/>
</dbReference>
<dbReference type="GO" id="GO:0009245">
    <property type="term" value="P:lipid A biosynthetic process"/>
    <property type="evidence" value="ECO:0007669"/>
    <property type="project" value="UniProtKB-UniRule"/>
</dbReference>
<dbReference type="CDD" id="cd03352">
    <property type="entry name" value="LbH_LpxD"/>
    <property type="match status" value="1"/>
</dbReference>
<dbReference type="Gene3D" id="2.160.10.10">
    <property type="entry name" value="Hexapeptide repeat proteins"/>
    <property type="match status" value="1"/>
</dbReference>
<dbReference type="Gene3D" id="3.40.1390.10">
    <property type="entry name" value="MurE/MurF, N-terminal domain"/>
    <property type="match status" value="1"/>
</dbReference>
<dbReference type="HAMAP" id="MF_00523">
    <property type="entry name" value="LpxD"/>
    <property type="match status" value="1"/>
</dbReference>
<dbReference type="InterPro" id="IPR001451">
    <property type="entry name" value="Hexapep"/>
</dbReference>
<dbReference type="InterPro" id="IPR007691">
    <property type="entry name" value="LpxD"/>
</dbReference>
<dbReference type="InterPro" id="IPR011004">
    <property type="entry name" value="Trimer_LpxA-like_sf"/>
</dbReference>
<dbReference type="InterPro" id="IPR020573">
    <property type="entry name" value="UDP_GlcNAc_AcTrfase_non-rep"/>
</dbReference>
<dbReference type="NCBIfam" id="TIGR01853">
    <property type="entry name" value="lipid_A_lpxD"/>
    <property type="match status" value="1"/>
</dbReference>
<dbReference type="NCBIfam" id="NF002060">
    <property type="entry name" value="PRK00892.1"/>
    <property type="match status" value="1"/>
</dbReference>
<dbReference type="PANTHER" id="PTHR43378">
    <property type="entry name" value="UDP-3-O-ACYLGLUCOSAMINE N-ACYLTRANSFERASE"/>
    <property type="match status" value="1"/>
</dbReference>
<dbReference type="PANTHER" id="PTHR43378:SF2">
    <property type="entry name" value="UDP-3-O-ACYLGLUCOSAMINE N-ACYLTRANSFERASE 1, MITOCHONDRIAL-RELATED"/>
    <property type="match status" value="1"/>
</dbReference>
<dbReference type="Pfam" id="PF00132">
    <property type="entry name" value="Hexapep"/>
    <property type="match status" value="1"/>
</dbReference>
<dbReference type="Pfam" id="PF04613">
    <property type="entry name" value="LpxD"/>
    <property type="match status" value="1"/>
</dbReference>
<dbReference type="SUPFAM" id="SSF51161">
    <property type="entry name" value="Trimeric LpxA-like enzymes"/>
    <property type="match status" value="1"/>
</dbReference>
<feature type="chain" id="PRO_0000059689" description="UDP-3-O-acylglucosamine N-acyltransferase">
    <location>
        <begin position="1"/>
        <end position="349"/>
    </location>
</feature>
<feature type="active site" description="Proton acceptor" evidence="1">
    <location>
        <position position="240"/>
    </location>
</feature>
<sequence length="349" mass="37403">MEFTAQQIADYLHGSVEGNPKVRLHDFAKIEEGRSGCLSFLANAKYEHYLYQTQSDAVLVNQDFEPRESVKTTLIRVPNAYTALAQLMQLVDSMKPQRKGVDSTAFVHPSVILPDDCYVGAFAYVSEGASLGTGCSLYPHVYVGSGVSVGEGTILYPHVTVYDGCSIGSRCVIHSGAVIGADGFGFAPNAEGYSKIPQLGNVIIEDDVEIGANTCIDRAVMDSTIIHRGVKLDNLVQIAHNCSVGSHTVFAAQVGMAGSSHVGEWCQFGGQVGLSGHIKVGDRVSLGGQTGLLSNVKSGSTLLGSPGMPLRDMLRASVIFPKLPDMSLRIEQLEKEISELKEICKNNKH</sequence>
<protein>
    <recommendedName>
        <fullName evidence="1">UDP-3-O-acylglucosamine N-acyltransferase</fullName>
        <ecNumber evidence="1">2.3.1.191</ecNumber>
    </recommendedName>
</protein>
<proteinExistence type="inferred from homology"/>
<evidence type="ECO:0000255" key="1">
    <source>
        <dbReference type="HAMAP-Rule" id="MF_00523"/>
    </source>
</evidence>
<gene>
    <name evidence="1" type="primary">lpxD</name>
    <name type="ordered locus">PG_0072</name>
</gene>
<reference key="1">
    <citation type="journal article" date="2003" name="J. Bacteriol.">
        <title>Complete genome sequence of the oral pathogenic bacterium Porphyromonas gingivalis strain W83.</title>
        <authorList>
            <person name="Nelson K.E."/>
            <person name="Fleischmann R.D."/>
            <person name="DeBoy R.T."/>
            <person name="Paulsen I.T."/>
            <person name="Fouts D.E."/>
            <person name="Eisen J.A."/>
            <person name="Daugherty S.C."/>
            <person name="Dodson R.J."/>
            <person name="Durkin A.S."/>
            <person name="Gwinn M.L."/>
            <person name="Haft D.H."/>
            <person name="Kolonay J.F."/>
            <person name="Nelson W.C."/>
            <person name="Mason T.M."/>
            <person name="Tallon L."/>
            <person name="Gray J."/>
            <person name="Granger D."/>
            <person name="Tettelin H."/>
            <person name="Dong H."/>
            <person name="Galvin J.L."/>
            <person name="Duncan M.J."/>
            <person name="Dewhirst F.E."/>
            <person name="Fraser C.M."/>
        </authorList>
    </citation>
    <scope>NUCLEOTIDE SEQUENCE [LARGE SCALE GENOMIC DNA]</scope>
    <source>
        <strain>ATCC BAA-308 / W83</strain>
    </source>
</reference>
<name>LPXD_PORGI</name>
<accession>Q7MXT7</accession>
<keyword id="KW-0012">Acyltransferase</keyword>
<keyword id="KW-0441">Lipid A biosynthesis</keyword>
<keyword id="KW-0444">Lipid biosynthesis</keyword>
<keyword id="KW-0443">Lipid metabolism</keyword>
<keyword id="KW-1185">Reference proteome</keyword>
<keyword id="KW-0677">Repeat</keyword>
<keyword id="KW-0808">Transferase</keyword>
<organism>
    <name type="scientific">Porphyromonas gingivalis (strain ATCC BAA-308 / W83)</name>
    <dbReference type="NCBI Taxonomy" id="242619"/>
    <lineage>
        <taxon>Bacteria</taxon>
        <taxon>Pseudomonadati</taxon>
        <taxon>Bacteroidota</taxon>
        <taxon>Bacteroidia</taxon>
        <taxon>Bacteroidales</taxon>
        <taxon>Porphyromonadaceae</taxon>
        <taxon>Porphyromonas</taxon>
    </lineage>
</organism>
<comment type="function">
    <text evidence="1">Catalyzes the N-acylation of UDP-3-O-acylglucosamine using 3-hydroxyacyl-ACP as the acyl donor. Is involved in the biosynthesis of lipid A, a phosphorylated glycolipid that anchors the lipopolysaccharide to the outer membrane of the cell.</text>
</comment>
<comment type="catalytic activity">
    <reaction evidence="1">
        <text>a UDP-3-O-[(3R)-3-hydroxyacyl]-alpha-D-glucosamine + a (3R)-hydroxyacyl-[ACP] = a UDP-2-N,3-O-bis[(3R)-3-hydroxyacyl]-alpha-D-glucosamine + holo-[ACP] + H(+)</text>
        <dbReference type="Rhea" id="RHEA:53836"/>
        <dbReference type="Rhea" id="RHEA-COMP:9685"/>
        <dbReference type="Rhea" id="RHEA-COMP:9945"/>
        <dbReference type="ChEBI" id="CHEBI:15378"/>
        <dbReference type="ChEBI" id="CHEBI:64479"/>
        <dbReference type="ChEBI" id="CHEBI:78827"/>
        <dbReference type="ChEBI" id="CHEBI:137740"/>
        <dbReference type="ChEBI" id="CHEBI:137748"/>
        <dbReference type="EC" id="2.3.1.191"/>
    </reaction>
</comment>
<comment type="pathway">
    <text evidence="1">Bacterial outer membrane biogenesis; LPS lipid A biosynthesis.</text>
</comment>
<comment type="subunit">
    <text evidence="1">Homotrimer.</text>
</comment>
<comment type="similarity">
    <text evidence="1">Belongs to the transferase hexapeptide repeat family. LpxD subfamily.</text>
</comment>